<gene>
    <name evidence="1" type="primary">rpl21</name>
</gene>
<keyword id="KW-0150">Chloroplast</keyword>
<keyword id="KW-0934">Plastid</keyword>
<keyword id="KW-0687">Ribonucleoprotein</keyword>
<keyword id="KW-0689">Ribosomal protein</keyword>
<keyword id="KW-0694">RNA-binding</keyword>
<keyword id="KW-0699">rRNA-binding</keyword>
<protein>
    <recommendedName>
        <fullName evidence="1">Large ribosomal subunit protein bL21c</fullName>
    </recommendedName>
    <alternativeName>
        <fullName evidence="2">50S ribosomal protein L21, chloroplastic</fullName>
    </alternativeName>
</protein>
<feature type="chain" id="PRO_0000181025" description="Large ribosomal subunit protein bL21c">
    <location>
        <begin position="1"/>
        <end position="116"/>
    </location>
</feature>
<name>RK21_MARPO</name>
<geneLocation type="chloroplast"/>
<proteinExistence type="inferred from homology"/>
<evidence type="ECO:0000255" key="1">
    <source>
        <dbReference type="HAMAP-Rule" id="MF_01363"/>
    </source>
</evidence>
<evidence type="ECO:0000305" key="2"/>
<organism>
    <name type="scientific">Marchantia polymorpha</name>
    <name type="common">Common liverwort</name>
    <name type="synonym">Marchantia aquatica</name>
    <dbReference type="NCBI Taxonomy" id="3197"/>
    <lineage>
        <taxon>Eukaryota</taxon>
        <taxon>Viridiplantae</taxon>
        <taxon>Streptophyta</taxon>
        <taxon>Embryophyta</taxon>
        <taxon>Marchantiophyta</taxon>
        <taxon>Marchantiopsida</taxon>
        <taxon>Marchantiidae</taxon>
        <taxon>Marchantiales</taxon>
        <taxon>Marchantiaceae</taxon>
        <taxon>Marchantia</taxon>
    </lineage>
</organism>
<dbReference type="EMBL" id="X04465">
    <property type="protein sequence ID" value="CAA28130.1"/>
    <property type="molecule type" value="Genomic_DNA"/>
</dbReference>
<dbReference type="PIR" id="A02810">
    <property type="entry name" value="R5LV21"/>
</dbReference>
<dbReference type="RefSeq" id="NP_039344.1">
    <property type="nucleotide sequence ID" value="NC_001319.1"/>
</dbReference>
<dbReference type="SMR" id="P06387"/>
<dbReference type="GeneID" id="2702576"/>
<dbReference type="GO" id="GO:0009507">
    <property type="term" value="C:chloroplast"/>
    <property type="evidence" value="ECO:0007669"/>
    <property type="project" value="UniProtKB-SubCell"/>
</dbReference>
<dbReference type="GO" id="GO:1990904">
    <property type="term" value="C:ribonucleoprotein complex"/>
    <property type="evidence" value="ECO:0007669"/>
    <property type="project" value="UniProtKB-KW"/>
</dbReference>
<dbReference type="GO" id="GO:0005840">
    <property type="term" value="C:ribosome"/>
    <property type="evidence" value="ECO:0007669"/>
    <property type="project" value="UniProtKB-KW"/>
</dbReference>
<dbReference type="GO" id="GO:0019843">
    <property type="term" value="F:rRNA binding"/>
    <property type="evidence" value="ECO:0007669"/>
    <property type="project" value="UniProtKB-UniRule"/>
</dbReference>
<dbReference type="GO" id="GO:0003735">
    <property type="term" value="F:structural constituent of ribosome"/>
    <property type="evidence" value="ECO:0007669"/>
    <property type="project" value="InterPro"/>
</dbReference>
<dbReference type="GO" id="GO:0006412">
    <property type="term" value="P:translation"/>
    <property type="evidence" value="ECO:0007669"/>
    <property type="project" value="UniProtKB-UniRule"/>
</dbReference>
<dbReference type="HAMAP" id="MF_01363">
    <property type="entry name" value="Ribosomal_bL21"/>
    <property type="match status" value="1"/>
</dbReference>
<dbReference type="InterPro" id="IPR028909">
    <property type="entry name" value="bL21-like"/>
</dbReference>
<dbReference type="InterPro" id="IPR036164">
    <property type="entry name" value="bL21-like_sf"/>
</dbReference>
<dbReference type="InterPro" id="IPR001787">
    <property type="entry name" value="Ribosomal_bL21"/>
</dbReference>
<dbReference type="InterPro" id="IPR018258">
    <property type="entry name" value="Ribosomal_bL21_CS"/>
</dbReference>
<dbReference type="NCBIfam" id="TIGR00061">
    <property type="entry name" value="L21"/>
    <property type="match status" value="1"/>
</dbReference>
<dbReference type="PANTHER" id="PTHR21349">
    <property type="entry name" value="50S RIBOSOMAL PROTEIN L21"/>
    <property type="match status" value="1"/>
</dbReference>
<dbReference type="PANTHER" id="PTHR21349:SF0">
    <property type="entry name" value="LARGE RIBOSOMAL SUBUNIT PROTEIN BL21M"/>
    <property type="match status" value="1"/>
</dbReference>
<dbReference type="Pfam" id="PF00829">
    <property type="entry name" value="Ribosomal_L21p"/>
    <property type="match status" value="1"/>
</dbReference>
<dbReference type="SUPFAM" id="SSF141091">
    <property type="entry name" value="L21p-like"/>
    <property type="match status" value="1"/>
</dbReference>
<dbReference type="PROSITE" id="PS01169">
    <property type="entry name" value="RIBOSOMAL_L21"/>
    <property type="match status" value="1"/>
</dbReference>
<comment type="function">
    <text evidence="1">This protein binds to 23S rRNA.</text>
</comment>
<comment type="subunit">
    <text evidence="1">Part of the 50S ribosomal subunit.</text>
</comment>
<comment type="subcellular location">
    <subcellularLocation>
        <location>Plastid</location>
        <location>Chloroplast</location>
    </subcellularLocation>
</comment>
<comment type="similarity">
    <text evidence="1">Belongs to the bacterial ribosomal protein bL21 family.</text>
</comment>
<accession>P06387</accession>
<sequence length="116" mass="13626">MSKYAIIETGGQQLRVEPGRFYNIRHFVSLTPNELEQNTKILIYRVLMIRQESTIKMGHPWLKGAIVKGRILHSCLEKKITIYKMISKKKTRRKLGHRQKSTRFIVDSIFLNGKEI</sequence>
<reference key="1">
    <citation type="journal article" date="1986" name="Nature">
        <title>Chloroplast gene organization deduced from complete sequence of liverwort Marchantia polymorpha chloroplast DNA.</title>
        <authorList>
            <person name="Ohyama K."/>
            <person name="Fukuzawa H."/>
            <person name="Kohchi T."/>
            <person name="Shirai H."/>
            <person name="Sano T."/>
            <person name="Sano S."/>
            <person name="Umesono K."/>
            <person name="Shiki Y."/>
            <person name="Takeuchi M."/>
            <person name="Chang Z."/>
            <person name="Aota S."/>
            <person name="Inokuchi H."/>
            <person name="Ozeki H."/>
        </authorList>
    </citation>
    <scope>NUCLEOTIDE SEQUENCE [LARGE SCALE GENOMIC DNA]</scope>
</reference>
<reference key="2">
    <citation type="journal article" date="1988" name="J. Mol. Biol.">
        <title>Structure and organization of Marchantia polymorpha chloroplast genome. IV. Inverted repeat and small single copy regions.</title>
        <authorList>
            <person name="Kohchi T."/>
            <person name="Shirai H."/>
            <person name="Fukuzawa H."/>
            <person name="Sano T."/>
            <person name="Komano T."/>
            <person name="Umesono K."/>
            <person name="Inokuchi H."/>
            <person name="Ozeki H."/>
            <person name="Ohyama K."/>
        </authorList>
    </citation>
    <scope>NUCLEOTIDE SEQUENCE [GENOMIC DNA]</scope>
</reference>